<protein>
    <recommendedName>
        <fullName evidence="2">Small ribosomal subunit protein uS11A</fullName>
    </recommendedName>
    <alternativeName>
        <fullName evidence="2">40S ribosomal protein S14a</fullName>
    </alternativeName>
</protein>
<dbReference type="EMBL" id="M21045">
    <property type="protein sequence ID" value="AAA28852.1"/>
    <property type="molecule type" value="Genomic_DNA"/>
</dbReference>
<dbReference type="EMBL" id="AE014298">
    <property type="protein sequence ID" value="AAF46298.1"/>
    <property type="molecule type" value="Genomic_DNA"/>
</dbReference>
<dbReference type="EMBL" id="AY070665">
    <property type="protein sequence ID" value="AAL48136.1"/>
    <property type="status" value="ALT_FRAME"/>
    <property type="molecule type" value="mRNA"/>
</dbReference>
<dbReference type="PIR" id="A30815">
    <property type="entry name" value="A30815"/>
</dbReference>
<dbReference type="RefSeq" id="NP_524884.1">
    <property type="nucleotide sequence ID" value="NM_080145.5"/>
</dbReference>
<dbReference type="RefSeq" id="NP_727218.1">
    <property type="nucleotide sequence ID" value="NM_167137.2"/>
</dbReference>
<dbReference type="PDB" id="4V6W">
    <property type="method" value="EM"/>
    <property type="resolution" value="6.00 A"/>
    <property type="chains" value="AO=1-151"/>
</dbReference>
<dbReference type="PDB" id="6XU6">
    <property type="method" value="EM"/>
    <property type="resolution" value="3.50 A"/>
    <property type="chains" value="AO=25-151"/>
</dbReference>
<dbReference type="PDB" id="6XU7">
    <property type="method" value="EM"/>
    <property type="resolution" value="4.90 A"/>
    <property type="chains" value="AO=18-151"/>
</dbReference>
<dbReference type="PDB" id="6XU8">
    <property type="method" value="EM"/>
    <property type="resolution" value="3.00 A"/>
    <property type="chains" value="AO=25-151"/>
</dbReference>
<dbReference type="PDBsum" id="4V6W"/>
<dbReference type="PDBsum" id="6XU6"/>
<dbReference type="PDBsum" id="6XU7"/>
<dbReference type="PDBsum" id="6XU8"/>
<dbReference type="EMDB" id="EMD-10622"/>
<dbReference type="EMDB" id="EMD-10623"/>
<dbReference type="EMDB" id="EMD-10624"/>
<dbReference type="SMR" id="C0HKA0"/>
<dbReference type="FunCoup" id="C0HKA0">
    <property type="interactions" value="1200"/>
</dbReference>
<dbReference type="STRING" id="7227.FBpp0071051"/>
<dbReference type="PaxDb" id="7227-FBpp0071050"/>
<dbReference type="DNASU" id="47219"/>
<dbReference type="EnsemblMetazoa" id="FBtr0071094">
    <property type="protein sequence ID" value="FBpp0071050"/>
    <property type="gene ID" value="FBgn0004403"/>
</dbReference>
<dbReference type="EnsemblMetazoa" id="FBtr0071095">
    <property type="protein sequence ID" value="FBpp0071051"/>
    <property type="gene ID" value="FBgn0004403"/>
</dbReference>
<dbReference type="EnsemblMetazoa" id="FBtr0071096">
    <property type="protein sequence ID" value="FBpp0071052"/>
    <property type="gene ID" value="FBgn0004404"/>
</dbReference>
<dbReference type="EnsemblMetazoa" id="FBtr0345291">
    <property type="protein sequence ID" value="FBpp0311458"/>
    <property type="gene ID" value="FBgn0004404"/>
</dbReference>
<dbReference type="GeneID" id="47218"/>
<dbReference type="KEGG" id="dme:Dmel_CG1524"/>
<dbReference type="KEGG" id="dme:Dmel_CG1527"/>
<dbReference type="AGR" id="FB:FBgn0004403"/>
<dbReference type="CTD" id="47218"/>
<dbReference type="CTD" id="47219"/>
<dbReference type="FlyBase" id="FBgn0004403">
    <property type="gene designation" value="RpS14a"/>
</dbReference>
<dbReference type="VEuPathDB" id="VectorBase:FBgn0004403"/>
<dbReference type="VEuPathDB" id="VectorBase:FBgn0004404"/>
<dbReference type="eggNOG" id="KOG0407">
    <property type="taxonomic scope" value="Eukaryota"/>
</dbReference>
<dbReference type="InParanoid" id="C0HKA0"/>
<dbReference type="OMA" id="KWGVAHI"/>
<dbReference type="OrthoDB" id="1677536at2759"/>
<dbReference type="BioGRID-ORCS" id="47218">
    <property type="hits" value="0 hits in 1 CRISPR screen"/>
</dbReference>
<dbReference type="BioGRID-ORCS" id="47219">
    <property type="hits" value="0 hits in 1 CRISPR screen"/>
</dbReference>
<dbReference type="ChiTaRS" id="RpS14a">
    <property type="organism name" value="fly"/>
</dbReference>
<dbReference type="PRO" id="PR:C0HKA0"/>
<dbReference type="Proteomes" id="UP000000803">
    <property type="component" value="Chromosome X"/>
</dbReference>
<dbReference type="Bgee" id="FBgn0004403">
    <property type="expression patterns" value="Expressed in wing disc and 287 other cell types or tissues"/>
</dbReference>
<dbReference type="ExpressionAtlas" id="C0HKA0">
    <property type="expression patterns" value="baseline and differential"/>
</dbReference>
<dbReference type="GO" id="GO:0022626">
    <property type="term" value="C:cytosolic ribosome"/>
    <property type="evidence" value="ECO:0000314"/>
    <property type="project" value="FlyBase"/>
</dbReference>
<dbReference type="GO" id="GO:0022627">
    <property type="term" value="C:cytosolic small ribosomal subunit"/>
    <property type="evidence" value="ECO:0000318"/>
    <property type="project" value="GO_Central"/>
</dbReference>
<dbReference type="GO" id="GO:0003735">
    <property type="term" value="F:structural constituent of ribosome"/>
    <property type="evidence" value="ECO:0000314"/>
    <property type="project" value="FlyBase"/>
</dbReference>
<dbReference type="GO" id="GO:0002181">
    <property type="term" value="P:cytoplasmic translation"/>
    <property type="evidence" value="ECO:0000304"/>
    <property type="project" value="FlyBase"/>
</dbReference>
<dbReference type="GO" id="GO:0000028">
    <property type="term" value="P:ribosomal small subunit assembly"/>
    <property type="evidence" value="ECO:0000318"/>
    <property type="project" value="GO_Central"/>
</dbReference>
<dbReference type="GO" id="GO:0006412">
    <property type="term" value="P:translation"/>
    <property type="evidence" value="ECO:0000318"/>
    <property type="project" value="GO_Central"/>
</dbReference>
<dbReference type="FunFam" id="3.30.420.80:FF:000002">
    <property type="entry name" value="40S ribosomal protein S14"/>
    <property type="match status" value="1"/>
</dbReference>
<dbReference type="Gene3D" id="3.30.420.80">
    <property type="entry name" value="Ribosomal protein S11"/>
    <property type="match status" value="1"/>
</dbReference>
<dbReference type="HAMAP" id="MF_01310">
    <property type="entry name" value="Ribosomal_uS11"/>
    <property type="match status" value="1"/>
</dbReference>
<dbReference type="InterPro" id="IPR001971">
    <property type="entry name" value="Ribosomal_uS11"/>
</dbReference>
<dbReference type="InterPro" id="IPR018102">
    <property type="entry name" value="Ribosomal_uS11_CS"/>
</dbReference>
<dbReference type="InterPro" id="IPR036967">
    <property type="entry name" value="Ribosomal_uS11_sf"/>
</dbReference>
<dbReference type="NCBIfam" id="NF007176">
    <property type="entry name" value="PRK09607.1"/>
    <property type="match status" value="1"/>
</dbReference>
<dbReference type="PANTHER" id="PTHR11759">
    <property type="entry name" value="40S RIBOSOMAL PROTEIN S14/30S RIBOSOMAL PROTEIN S11"/>
    <property type="match status" value="1"/>
</dbReference>
<dbReference type="Pfam" id="PF00411">
    <property type="entry name" value="Ribosomal_S11"/>
    <property type="match status" value="1"/>
</dbReference>
<dbReference type="PIRSF" id="PIRSF002131">
    <property type="entry name" value="Ribosomal_S11"/>
    <property type="match status" value="1"/>
</dbReference>
<dbReference type="SUPFAM" id="SSF53137">
    <property type="entry name" value="Translational machinery components"/>
    <property type="match status" value="1"/>
</dbReference>
<dbReference type="PROSITE" id="PS00054">
    <property type="entry name" value="RIBOSOMAL_S11"/>
    <property type="match status" value="1"/>
</dbReference>
<reference key="1">
    <citation type="journal article" date="1988" name="Mol. Cell. Biol.">
        <title>Ribosomal protein S14 is encoded by a pair of highly conserved, adjacent genes on the X chromosome of Drosophila melanogaster.</title>
        <authorList>
            <person name="Brown S.J."/>
            <person name="Rhoads D.D."/>
            <person name="Stewart M.J."/>
            <person name="van Slyke B."/>
            <person name="Chen I.-T."/>
            <person name="Johnson T.K."/>
            <person name="Denell R.E."/>
            <person name="Roufa D.J."/>
        </authorList>
    </citation>
    <scope>NUCLEOTIDE SEQUENCE [GENOMIC DNA]</scope>
</reference>
<reference key="2">
    <citation type="journal article" date="2000" name="Science">
        <title>The genome sequence of Drosophila melanogaster.</title>
        <authorList>
            <person name="Adams M.D."/>
            <person name="Celniker S.E."/>
            <person name="Holt R.A."/>
            <person name="Evans C.A."/>
            <person name="Gocayne J.D."/>
            <person name="Amanatides P.G."/>
            <person name="Scherer S.E."/>
            <person name="Li P.W."/>
            <person name="Hoskins R.A."/>
            <person name="Galle R.F."/>
            <person name="George R.A."/>
            <person name="Lewis S.E."/>
            <person name="Richards S."/>
            <person name="Ashburner M."/>
            <person name="Henderson S.N."/>
            <person name="Sutton G.G."/>
            <person name="Wortman J.R."/>
            <person name="Yandell M.D."/>
            <person name="Zhang Q."/>
            <person name="Chen L.X."/>
            <person name="Brandon R.C."/>
            <person name="Rogers Y.-H.C."/>
            <person name="Blazej R.G."/>
            <person name="Champe M."/>
            <person name="Pfeiffer B.D."/>
            <person name="Wan K.H."/>
            <person name="Doyle C."/>
            <person name="Baxter E.G."/>
            <person name="Helt G."/>
            <person name="Nelson C.R."/>
            <person name="Miklos G.L.G."/>
            <person name="Abril J.F."/>
            <person name="Agbayani A."/>
            <person name="An H.-J."/>
            <person name="Andrews-Pfannkoch C."/>
            <person name="Baldwin D."/>
            <person name="Ballew R.M."/>
            <person name="Basu A."/>
            <person name="Baxendale J."/>
            <person name="Bayraktaroglu L."/>
            <person name="Beasley E.M."/>
            <person name="Beeson K.Y."/>
            <person name="Benos P.V."/>
            <person name="Berman B.P."/>
            <person name="Bhandari D."/>
            <person name="Bolshakov S."/>
            <person name="Borkova D."/>
            <person name="Botchan M.R."/>
            <person name="Bouck J."/>
            <person name="Brokstein P."/>
            <person name="Brottier P."/>
            <person name="Burtis K.C."/>
            <person name="Busam D.A."/>
            <person name="Butler H."/>
            <person name="Cadieu E."/>
            <person name="Center A."/>
            <person name="Chandra I."/>
            <person name="Cherry J.M."/>
            <person name="Cawley S."/>
            <person name="Dahlke C."/>
            <person name="Davenport L.B."/>
            <person name="Davies P."/>
            <person name="de Pablos B."/>
            <person name="Delcher A."/>
            <person name="Deng Z."/>
            <person name="Mays A.D."/>
            <person name="Dew I."/>
            <person name="Dietz S.M."/>
            <person name="Dodson K."/>
            <person name="Doup L.E."/>
            <person name="Downes M."/>
            <person name="Dugan-Rocha S."/>
            <person name="Dunkov B.C."/>
            <person name="Dunn P."/>
            <person name="Durbin K.J."/>
            <person name="Evangelista C.C."/>
            <person name="Ferraz C."/>
            <person name="Ferriera S."/>
            <person name="Fleischmann W."/>
            <person name="Fosler C."/>
            <person name="Gabrielian A.E."/>
            <person name="Garg N.S."/>
            <person name="Gelbart W.M."/>
            <person name="Glasser K."/>
            <person name="Glodek A."/>
            <person name="Gong F."/>
            <person name="Gorrell J.H."/>
            <person name="Gu Z."/>
            <person name="Guan P."/>
            <person name="Harris M."/>
            <person name="Harris N.L."/>
            <person name="Harvey D.A."/>
            <person name="Heiman T.J."/>
            <person name="Hernandez J.R."/>
            <person name="Houck J."/>
            <person name="Hostin D."/>
            <person name="Houston K.A."/>
            <person name="Howland T.J."/>
            <person name="Wei M.-H."/>
            <person name="Ibegwam C."/>
            <person name="Jalali M."/>
            <person name="Kalush F."/>
            <person name="Karpen G.H."/>
            <person name="Ke Z."/>
            <person name="Kennison J.A."/>
            <person name="Ketchum K.A."/>
            <person name="Kimmel B.E."/>
            <person name="Kodira C.D."/>
            <person name="Kraft C.L."/>
            <person name="Kravitz S."/>
            <person name="Kulp D."/>
            <person name="Lai Z."/>
            <person name="Lasko P."/>
            <person name="Lei Y."/>
            <person name="Levitsky A.A."/>
            <person name="Li J.H."/>
            <person name="Li Z."/>
            <person name="Liang Y."/>
            <person name="Lin X."/>
            <person name="Liu X."/>
            <person name="Mattei B."/>
            <person name="McIntosh T.C."/>
            <person name="McLeod M.P."/>
            <person name="McPherson D."/>
            <person name="Merkulov G."/>
            <person name="Milshina N.V."/>
            <person name="Mobarry C."/>
            <person name="Morris J."/>
            <person name="Moshrefi A."/>
            <person name="Mount S.M."/>
            <person name="Moy M."/>
            <person name="Murphy B."/>
            <person name="Murphy L."/>
            <person name="Muzny D.M."/>
            <person name="Nelson D.L."/>
            <person name="Nelson D.R."/>
            <person name="Nelson K.A."/>
            <person name="Nixon K."/>
            <person name="Nusskern D.R."/>
            <person name="Pacleb J.M."/>
            <person name="Palazzolo M."/>
            <person name="Pittman G.S."/>
            <person name="Pan S."/>
            <person name="Pollard J."/>
            <person name="Puri V."/>
            <person name="Reese M.G."/>
            <person name="Reinert K."/>
            <person name="Remington K."/>
            <person name="Saunders R.D.C."/>
            <person name="Scheeler F."/>
            <person name="Shen H."/>
            <person name="Shue B.C."/>
            <person name="Siden-Kiamos I."/>
            <person name="Simpson M."/>
            <person name="Skupski M.P."/>
            <person name="Smith T.J."/>
            <person name="Spier E."/>
            <person name="Spradling A.C."/>
            <person name="Stapleton M."/>
            <person name="Strong R."/>
            <person name="Sun E."/>
            <person name="Svirskas R."/>
            <person name="Tector C."/>
            <person name="Turner R."/>
            <person name="Venter E."/>
            <person name="Wang A.H."/>
            <person name="Wang X."/>
            <person name="Wang Z.-Y."/>
            <person name="Wassarman D.A."/>
            <person name="Weinstock G.M."/>
            <person name="Weissenbach J."/>
            <person name="Williams S.M."/>
            <person name="Woodage T."/>
            <person name="Worley K.C."/>
            <person name="Wu D."/>
            <person name="Yang S."/>
            <person name="Yao Q.A."/>
            <person name="Ye J."/>
            <person name="Yeh R.-F."/>
            <person name="Zaveri J.S."/>
            <person name="Zhan M."/>
            <person name="Zhang G."/>
            <person name="Zhao Q."/>
            <person name="Zheng L."/>
            <person name="Zheng X.H."/>
            <person name="Zhong F.N."/>
            <person name="Zhong W."/>
            <person name="Zhou X."/>
            <person name="Zhu S.C."/>
            <person name="Zhu X."/>
            <person name="Smith H.O."/>
            <person name="Gibbs R.A."/>
            <person name="Myers E.W."/>
            <person name="Rubin G.M."/>
            <person name="Venter J.C."/>
        </authorList>
    </citation>
    <scope>NUCLEOTIDE SEQUENCE [LARGE SCALE GENOMIC DNA]</scope>
    <source>
        <strain>Berkeley</strain>
    </source>
</reference>
<reference key="3">
    <citation type="journal article" date="2002" name="Genome Biol.">
        <title>Annotation of the Drosophila melanogaster euchromatic genome: a systematic review.</title>
        <authorList>
            <person name="Misra S."/>
            <person name="Crosby M.A."/>
            <person name="Mungall C.J."/>
            <person name="Matthews B.B."/>
            <person name="Campbell K.S."/>
            <person name="Hradecky P."/>
            <person name="Huang Y."/>
            <person name="Kaminker J.S."/>
            <person name="Millburn G.H."/>
            <person name="Prochnik S.E."/>
            <person name="Smith C.D."/>
            <person name="Tupy J.L."/>
            <person name="Whitfield E.J."/>
            <person name="Bayraktaroglu L."/>
            <person name="Berman B.P."/>
            <person name="Bettencourt B.R."/>
            <person name="Celniker S.E."/>
            <person name="de Grey A.D.N.J."/>
            <person name="Drysdale R.A."/>
            <person name="Harris N.L."/>
            <person name="Richter J."/>
            <person name="Russo S."/>
            <person name="Schroeder A.J."/>
            <person name="Shu S.Q."/>
            <person name="Stapleton M."/>
            <person name="Yamada C."/>
            <person name="Ashburner M."/>
            <person name="Gelbart W.M."/>
            <person name="Rubin G.M."/>
            <person name="Lewis S.E."/>
        </authorList>
    </citation>
    <scope>GENOME REANNOTATION</scope>
    <source>
        <strain>Berkeley</strain>
    </source>
</reference>
<reference key="4">
    <citation type="journal article" date="2002" name="Genome Biol.">
        <title>A Drosophila full-length cDNA resource.</title>
        <authorList>
            <person name="Stapleton M."/>
            <person name="Carlson J.W."/>
            <person name="Brokstein P."/>
            <person name="Yu C."/>
            <person name="Champe M."/>
            <person name="George R.A."/>
            <person name="Guarin H."/>
            <person name="Kronmiller B."/>
            <person name="Pacleb J.M."/>
            <person name="Park S."/>
            <person name="Wan K.H."/>
            <person name="Rubin G.M."/>
            <person name="Celniker S.E."/>
        </authorList>
    </citation>
    <scope>NUCLEOTIDE SEQUENCE [LARGE SCALE MRNA]</scope>
    <source>
        <strain>Berkeley</strain>
        <tissue>Embryo</tissue>
        <tissue>Head</tissue>
    </source>
</reference>
<reference key="5">
    <citation type="journal article" date="2013" name="Nature">
        <title>Structures of the human and Drosophila 80S ribosome.</title>
        <authorList>
            <person name="Anger A.M."/>
            <person name="Armache J.P."/>
            <person name="Berninghausen O."/>
            <person name="Habeck M."/>
            <person name="Subklewe M."/>
            <person name="Wilson D.N."/>
            <person name="Beckmann R."/>
        </authorList>
    </citation>
    <scope>STRUCTURE BY ELECTRON MICROSCOPY (6.0 ANGSTROMS) OF THE 80S RIBOSOME</scope>
</reference>
<keyword id="KW-0002">3D-structure</keyword>
<keyword id="KW-1185">Reference proteome</keyword>
<keyword id="KW-0687">Ribonucleoprotein</keyword>
<keyword id="KW-0689">Ribosomal protein</keyword>
<comment type="similarity">
    <text evidence="2">Belongs to the universal ribosomal protein uS11 family.</text>
</comment>
<comment type="sequence caution" evidence="2">
    <conflict type="frameshift">
        <sequence resource="EMBL-CDS" id="AAL48136"/>
    </conflict>
</comment>
<sequence>MAPRKAKVQKEEVQVQLGPQVRDGEIVFGVAHIYASFNDTFVHVTDLSGRETIARVTGGMKVKADRDEASPYAAMLAAQDVAEKCKTLGITALHIKLRATGGNKTKTPGPGAQSALRALARSSMKIGRIEDVTPIPSDSTRRKGGRRGRRL</sequence>
<organism>
    <name type="scientific">Drosophila melanogaster</name>
    <name type="common">Fruit fly</name>
    <dbReference type="NCBI Taxonomy" id="7227"/>
    <lineage>
        <taxon>Eukaryota</taxon>
        <taxon>Metazoa</taxon>
        <taxon>Ecdysozoa</taxon>
        <taxon>Arthropoda</taxon>
        <taxon>Hexapoda</taxon>
        <taxon>Insecta</taxon>
        <taxon>Pterygota</taxon>
        <taxon>Neoptera</taxon>
        <taxon>Endopterygota</taxon>
        <taxon>Diptera</taxon>
        <taxon>Brachycera</taxon>
        <taxon>Muscomorpha</taxon>
        <taxon>Ephydroidea</taxon>
        <taxon>Drosophilidae</taxon>
        <taxon>Drosophila</taxon>
        <taxon>Sophophora</taxon>
    </lineage>
</organism>
<name>RS14A_DROME</name>
<feature type="chain" id="PRO_0000123342" description="Small ribosomal subunit protein uS11A">
    <location>
        <begin position="1"/>
        <end position="151"/>
    </location>
</feature>
<feature type="region of interest" description="Disordered" evidence="1">
    <location>
        <begin position="131"/>
        <end position="151"/>
    </location>
</feature>
<feature type="compositionally biased region" description="Basic residues" evidence="1">
    <location>
        <begin position="142"/>
        <end position="151"/>
    </location>
</feature>
<gene>
    <name evidence="3" type="primary">RpS14a</name>
    <name evidence="3" type="ORF">CG1524</name>
</gene>
<proteinExistence type="evidence at protein level"/>
<evidence type="ECO:0000256" key="1">
    <source>
        <dbReference type="SAM" id="MobiDB-lite"/>
    </source>
</evidence>
<evidence type="ECO:0000305" key="2"/>
<evidence type="ECO:0000312" key="3">
    <source>
        <dbReference type="FlyBase" id="FBgn0004403"/>
    </source>
</evidence>
<accession>C0HKA0</accession>
<accession>P14130</accession>
<accession>Q0KHV1</accession>
<accession>Q8SZL7</accession>
<accession>Q9V3R5</accession>